<comment type="function">
    <text evidence="1">Carrier protein involved in the D-alanylation of lipoteichoic acid (LTA). The loading of thioester-linked D-alanine onto DltC is catalyzed by D-alanine--D-alanyl carrier protein ligase DltA. The DltC-carried D-alanyl group is further transferred to cell membrane phosphatidylglycerol (PG) by forming an ester bond, probably catalyzed by DltD. D-alanylation of LTA plays an important role in modulating the properties of the cell wall in Gram-positive bacteria, influencing the net charge of the cell wall.</text>
</comment>
<comment type="pathway">
    <text evidence="1">Cell wall biogenesis; lipoteichoic acid biosynthesis.</text>
</comment>
<comment type="subcellular location">
    <subcellularLocation>
        <location evidence="1">Cytoplasm</location>
    </subcellularLocation>
</comment>
<comment type="PTM">
    <text evidence="1">4'-phosphopantetheine is transferred from CoA to a specific serine of apo-DCP.</text>
</comment>
<comment type="similarity">
    <text evidence="1">Belongs to the DltC family.</text>
</comment>
<protein>
    <recommendedName>
        <fullName evidence="1">D-alanyl carrier protein</fullName>
        <shortName evidence="1">DCP</shortName>
    </recommendedName>
    <alternativeName>
        <fullName evidence="1">D-alanine--poly(phosphoribitol) ligase subunit 2</fullName>
    </alternativeName>
</protein>
<accession>P0A018</accession>
<accession>Q53663</accession>
<gene>
    <name evidence="1" type="primary">dltC</name>
    <name type="ordered locus">SAV0934</name>
</gene>
<sequence length="78" mass="9063">MEFREQVLNLLAEVAENDIVKENPDVEIFEEGIIDSFQTVGLLLEIQNKLDIEVSIMDFDRDEWATPNKIVEALEELR</sequence>
<organism>
    <name type="scientific">Staphylococcus aureus (strain Mu50 / ATCC 700699)</name>
    <dbReference type="NCBI Taxonomy" id="158878"/>
    <lineage>
        <taxon>Bacteria</taxon>
        <taxon>Bacillati</taxon>
        <taxon>Bacillota</taxon>
        <taxon>Bacilli</taxon>
        <taxon>Bacillales</taxon>
        <taxon>Staphylococcaceae</taxon>
        <taxon>Staphylococcus</taxon>
    </lineage>
</organism>
<feature type="chain" id="PRO_0000213098" description="D-alanyl carrier protein">
    <location>
        <begin position="1"/>
        <end position="78"/>
    </location>
</feature>
<feature type="domain" description="Carrier" evidence="1">
    <location>
        <begin position="1"/>
        <end position="78"/>
    </location>
</feature>
<feature type="modified residue" description="O-(pantetheine 4'-phosphoryl)serine" evidence="1">
    <location>
        <position position="36"/>
    </location>
</feature>
<evidence type="ECO:0000255" key="1">
    <source>
        <dbReference type="HAMAP-Rule" id="MF_00565"/>
    </source>
</evidence>
<proteinExistence type="inferred from homology"/>
<dbReference type="EMBL" id="BA000017">
    <property type="protein sequence ID" value="BAB57096.1"/>
    <property type="molecule type" value="Genomic_DNA"/>
</dbReference>
<dbReference type="RefSeq" id="WP_000395692.1">
    <property type="nucleotide sequence ID" value="NC_002758.2"/>
</dbReference>
<dbReference type="SMR" id="P0A018"/>
<dbReference type="GeneID" id="98345253"/>
<dbReference type="KEGG" id="sav:SAV0934"/>
<dbReference type="HOGENOM" id="CLU_108696_19_0_9"/>
<dbReference type="PhylomeDB" id="P0A018"/>
<dbReference type="UniPathway" id="UPA00556"/>
<dbReference type="Proteomes" id="UP000002481">
    <property type="component" value="Chromosome"/>
</dbReference>
<dbReference type="GO" id="GO:0005737">
    <property type="term" value="C:cytoplasm"/>
    <property type="evidence" value="ECO:0007669"/>
    <property type="project" value="UniProtKB-SubCell"/>
</dbReference>
<dbReference type="GO" id="GO:0036370">
    <property type="term" value="F:D-alanyl carrier activity"/>
    <property type="evidence" value="ECO:0007669"/>
    <property type="project" value="UniProtKB-UniRule"/>
</dbReference>
<dbReference type="GO" id="GO:0071555">
    <property type="term" value="P:cell wall organization"/>
    <property type="evidence" value="ECO:0007669"/>
    <property type="project" value="UniProtKB-KW"/>
</dbReference>
<dbReference type="GO" id="GO:0070395">
    <property type="term" value="P:lipoteichoic acid biosynthetic process"/>
    <property type="evidence" value="ECO:0007669"/>
    <property type="project" value="UniProtKB-UniRule"/>
</dbReference>
<dbReference type="Gene3D" id="1.10.1200.10">
    <property type="entry name" value="ACP-like"/>
    <property type="match status" value="1"/>
</dbReference>
<dbReference type="HAMAP" id="MF_00565">
    <property type="entry name" value="DltC"/>
    <property type="match status" value="1"/>
</dbReference>
<dbReference type="InterPro" id="IPR036736">
    <property type="entry name" value="ACP-like_sf"/>
</dbReference>
<dbReference type="InterPro" id="IPR003230">
    <property type="entry name" value="DltC"/>
</dbReference>
<dbReference type="InterPro" id="IPR009081">
    <property type="entry name" value="PP-bd_ACP"/>
</dbReference>
<dbReference type="NCBIfam" id="TIGR01688">
    <property type="entry name" value="dltC"/>
    <property type="match status" value="1"/>
</dbReference>
<dbReference type="NCBIfam" id="NF003464">
    <property type="entry name" value="PRK05087.1"/>
    <property type="match status" value="1"/>
</dbReference>
<dbReference type="Pfam" id="PF00550">
    <property type="entry name" value="PP-binding"/>
    <property type="match status" value="1"/>
</dbReference>
<dbReference type="SUPFAM" id="SSF47336">
    <property type="entry name" value="ACP-like"/>
    <property type="match status" value="1"/>
</dbReference>
<dbReference type="PROSITE" id="PS50075">
    <property type="entry name" value="CARRIER"/>
    <property type="match status" value="1"/>
</dbReference>
<reference key="1">
    <citation type="journal article" date="2001" name="Lancet">
        <title>Whole genome sequencing of meticillin-resistant Staphylococcus aureus.</title>
        <authorList>
            <person name="Kuroda M."/>
            <person name="Ohta T."/>
            <person name="Uchiyama I."/>
            <person name="Baba T."/>
            <person name="Yuzawa H."/>
            <person name="Kobayashi I."/>
            <person name="Cui L."/>
            <person name="Oguchi A."/>
            <person name="Aoki K."/>
            <person name="Nagai Y."/>
            <person name="Lian J.-Q."/>
            <person name="Ito T."/>
            <person name="Kanamori M."/>
            <person name="Matsumaru H."/>
            <person name="Maruyama A."/>
            <person name="Murakami H."/>
            <person name="Hosoyama A."/>
            <person name="Mizutani-Ui Y."/>
            <person name="Takahashi N.K."/>
            <person name="Sawano T."/>
            <person name="Inoue R."/>
            <person name="Kaito C."/>
            <person name="Sekimizu K."/>
            <person name="Hirakawa H."/>
            <person name="Kuhara S."/>
            <person name="Goto S."/>
            <person name="Yabuzaki J."/>
            <person name="Kanehisa M."/>
            <person name="Yamashita A."/>
            <person name="Oshima K."/>
            <person name="Furuya K."/>
            <person name="Yoshino C."/>
            <person name="Shiba T."/>
            <person name="Hattori M."/>
            <person name="Ogasawara N."/>
            <person name="Hayashi H."/>
            <person name="Hiramatsu K."/>
        </authorList>
    </citation>
    <scope>NUCLEOTIDE SEQUENCE [LARGE SCALE GENOMIC DNA]</scope>
    <source>
        <strain>Mu50 / ATCC 700699</strain>
    </source>
</reference>
<name>DLTC_STAAM</name>
<keyword id="KW-0961">Cell wall biogenesis/degradation</keyword>
<keyword id="KW-0963">Cytoplasm</keyword>
<keyword id="KW-0596">Phosphopantetheine</keyword>
<keyword id="KW-0597">Phosphoprotein</keyword>